<proteinExistence type="inferred from homology"/>
<keyword id="KW-0472">Membrane</keyword>
<keyword id="KW-0488">Methylation</keyword>
<keyword id="KW-1185">Reference proteome</keyword>
<keyword id="KW-0812">Transmembrane</keyword>
<keyword id="KW-1133">Transmembrane helix</keyword>
<organism>
    <name type="scientific">Aquifex aeolicus (strain VF5)</name>
    <dbReference type="NCBI Taxonomy" id="224324"/>
    <lineage>
        <taxon>Bacteria</taxon>
        <taxon>Pseudomonadati</taxon>
        <taxon>Aquificota</taxon>
        <taxon>Aquificia</taxon>
        <taxon>Aquificales</taxon>
        <taxon>Aquificaceae</taxon>
        <taxon>Aquifex</taxon>
    </lineage>
</organism>
<reference key="1">
    <citation type="journal article" date="1998" name="Nature">
        <title>The complete genome of the hyperthermophilic bacterium Aquifex aeolicus.</title>
        <authorList>
            <person name="Deckert G."/>
            <person name="Warren P.V."/>
            <person name="Gaasterland T."/>
            <person name="Young W.G."/>
            <person name="Lenox A.L."/>
            <person name="Graham D.E."/>
            <person name="Overbeek R."/>
            <person name="Snead M.A."/>
            <person name="Keller M."/>
            <person name="Aujay M."/>
            <person name="Huber R."/>
            <person name="Feldman R.A."/>
            <person name="Short J.M."/>
            <person name="Olsen G.J."/>
            <person name="Swanson R.V."/>
        </authorList>
    </citation>
    <scope>NUCLEOTIDE SEQUENCE [LARGE SCALE GENOMIC DNA]</scope>
    <source>
        <strain>VF5</strain>
    </source>
</reference>
<comment type="subcellular location">
    <subcellularLocation>
        <location evidence="2">Membrane</location>
        <topology evidence="2">Single-pass membrane protein</topology>
    </subcellularLocation>
</comment>
<evidence type="ECO:0000255" key="1">
    <source>
        <dbReference type="PROSITE-ProRule" id="PRU01070"/>
    </source>
</evidence>
<evidence type="ECO:0000305" key="2"/>
<feature type="propeptide" id="PRO_0000013622" description="Leader sequence" evidence="1">
    <location>
        <begin position="1"/>
        <end position="4"/>
    </location>
</feature>
<feature type="chain" id="PRO_0000013623" description="Uncharacterized protein aq_1436">
    <location>
        <begin position="5"/>
        <end position="276"/>
    </location>
</feature>
<feature type="transmembrane region" description="Helical" evidence="2">
    <location>
        <begin position="5"/>
        <end position="26"/>
    </location>
</feature>
<feature type="modified residue" description="N-methylmethionine" evidence="1">
    <location>
        <position position="5"/>
    </location>
</feature>
<dbReference type="EMBL" id="AE000657">
    <property type="protein sequence ID" value="AAC07392.1"/>
    <property type="molecule type" value="Genomic_DNA"/>
</dbReference>
<dbReference type="PIR" id="A70425">
    <property type="entry name" value="A70425"/>
</dbReference>
<dbReference type="RefSeq" id="NP_213992.1">
    <property type="nucleotide sequence ID" value="NC_000918.1"/>
</dbReference>
<dbReference type="RefSeq" id="WP_010880930.1">
    <property type="nucleotide sequence ID" value="NC_000918.1"/>
</dbReference>
<dbReference type="STRING" id="224324.aq_1436"/>
<dbReference type="EnsemblBacteria" id="AAC07392">
    <property type="protein sequence ID" value="AAC07392"/>
    <property type="gene ID" value="aq_1436"/>
</dbReference>
<dbReference type="KEGG" id="aae:aq_1436"/>
<dbReference type="eggNOG" id="COG4968">
    <property type="taxonomic scope" value="Bacteria"/>
</dbReference>
<dbReference type="HOGENOM" id="CLU_813617_0_0_0"/>
<dbReference type="InParanoid" id="O67427"/>
<dbReference type="OrthoDB" id="9812111at2"/>
<dbReference type="Proteomes" id="UP000000798">
    <property type="component" value="Chromosome"/>
</dbReference>
<dbReference type="GO" id="GO:0016020">
    <property type="term" value="C:membrane"/>
    <property type="evidence" value="ECO:0007669"/>
    <property type="project" value="UniProtKB-SubCell"/>
</dbReference>
<dbReference type="InterPro" id="IPR012902">
    <property type="entry name" value="N_methyl_site"/>
</dbReference>
<dbReference type="NCBIfam" id="TIGR02532">
    <property type="entry name" value="IV_pilin_GFxxxE"/>
    <property type="match status" value="1"/>
</dbReference>
<dbReference type="Pfam" id="PF07963">
    <property type="entry name" value="N_methyl"/>
    <property type="match status" value="1"/>
</dbReference>
<dbReference type="PROSITE" id="PS00409">
    <property type="entry name" value="PROKAR_NTER_METHYL"/>
    <property type="match status" value="1"/>
</dbReference>
<gene>
    <name type="ordered locus">aq_1436</name>
</gene>
<accession>O67427</accession>
<sequence>MNRGMTLIELLVALALSIILSLGLYYSFRYSGIFFSQDKAISDLIEYARTAEEQLKFYFDRWGNGVPEGGTDCTYSFPNGYPKNRFCIIKGSSGNCDEIIFYGNTQGFLIVLDEKDEDEFNALACRMTNDEDDYYYIWKEDKPVDTTTGNRIGVSGGDCGIKGIIPNASVAKEINTLDKGTVTLQTGDAIIRVPKIIKIYCSETNGELYLKVSEQEANKAPVESPLVPVKEMEATLLPEGCDPTNGECTAVRFRITFVNRVGNEEYTLTKDIVLGR</sequence>
<protein>
    <recommendedName>
        <fullName>Uncharacterized protein aq_1436</fullName>
    </recommendedName>
</protein>
<name>Y1436_AQUAE</name>